<keyword id="KW-0413">Isomerase</keyword>
<keyword id="KW-0819">tRNA processing</keyword>
<protein>
    <recommendedName>
        <fullName evidence="1">tRNA pseudouridine synthase D</fullName>
        <ecNumber evidence="1">5.4.99.27</ecNumber>
    </recommendedName>
    <alternativeName>
        <fullName evidence="1">tRNA pseudouridine(13) synthase</fullName>
    </alternativeName>
    <alternativeName>
        <fullName evidence="1">tRNA pseudouridylate synthase D</fullName>
    </alternativeName>
    <alternativeName>
        <fullName evidence="1">tRNA-uridine isomerase D</fullName>
    </alternativeName>
</protein>
<organism>
    <name type="scientific">Haemophilus influenzae (strain 86-028NP)</name>
    <dbReference type="NCBI Taxonomy" id="281310"/>
    <lineage>
        <taxon>Bacteria</taxon>
        <taxon>Pseudomonadati</taxon>
        <taxon>Pseudomonadota</taxon>
        <taxon>Gammaproteobacteria</taxon>
        <taxon>Pasteurellales</taxon>
        <taxon>Pasteurellaceae</taxon>
        <taxon>Haemophilus</taxon>
    </lineage>
</organism>
<gene>
    <name evidence="1" type="primary">truD</name>
    <name type="ordered locus">NTHI0824</name>
</gene>
<comment type="function">
    <text evidence="1">Responsible for synthesis of pseudouridine from uracil-13 in transfer RNAs.</text>
</comment>
<comment type="catalytic activity">
    <reaction evidence="1">
        <text>uridine(13) in tRNA = pseudouridine(13) in tRNA</text>
        <dbReference type="Rhea" id="RHEA:42540"/>
        <dbReference type="Rhea" id="RHEA-COMP:10105"/>
        <dbReference type="Rhea" id="RHEA-COMP:10106"/>
        <dbReference type="ChEBI" id="CHEBI:65314"/>
        <dbReference type="ChEBI" id="CHEBI:65315"/>
        <dbReference type="EC" id="5.4.99.27"/>
    </reaction>
</comment>
<comment type="similarity">
    <text evidence="1">Belongs to the pseudouridine synthase TruD family.</text>
</comment>
<reference key="1">
    <citation type="journal article" date="2005" name="J. Bacteriol.">
        <title>Genomic sequence of an otitis media isolate of nontypeable Haemophilus influenzae: comparative study with H. influenzae serotype d, strain KW20.</title>
        <authorList>
            <person name="Harrison A."/>
            <person name="Dyer D.W."/>
            <person name="Gillaspy A."/>
            <person name="Ray W.C."/>
            <person name="Mungur R."/>
            <person name="Carson M.B."/>
            <person name="Zhong H."/>
            <person name="Gipson J."/>
            <person name="Gipson M."/>
            <person name="Johnson L.S."/>
            <person name="Lewis L."/>
            <person name="Bakaletz L.O."/>
            <person name="Munson R.S. Jr."/>
        </authorList>
    </citation>
    <scope>NUCLEOTIDE SEQUENCE [LARGE SCALE GENOMIC DNA]</scope>
    <source>
        <strain>86-028NP</strain>
    </source>
</reference>
<sequence length="339" mass="38492">MLEQLPYLALKTPPKTTALLKAECADFIVKEHLGYEMSGDGEFVALYVRKTDCNTLFVGEKLAKFAGVSERNMGYAGLKDRRAVTEQWFCLQMPGMETPDFSQFELDGVEILTVTRHNRKIRTGSLEGNYFDILLRGAEESDELKVRLDFVANFGFPNYFTEQRFGREGHNLTQALRWAQGEIKVKDRKKRSFYLSAARSEIFNLVVAARIAKGATNQVLPNDIVQLAGSHSWFKADEKEDLTVLQVRLENQDILLTAPLIGEDILAASDIENEIVNQHSAFDSLMKQERMKAVRRPLLMKAKGFSWAFEPEGLRLKFYLPAGSYATALVRELVNYTEE</sequence>
<dbReference type="EC" id="5.4.99.27" evidence="1"/>
<dbReference type="EMBL" id="CP000057">
    <property type="protein sequence ID" value="AAX87728.1"/>
    <property type="molecule type" value="Genomic_DNA"/>
</dbReference>
<dbReference type="RefSeq" id="WP_011272177.1">
    <property type="nucleotide sequence ID" value="NC_007146.2"/>
</dbReference>
<dbReference type="SMR" id="Q4QML9"/>
<dbReference type="KEGG" id="hit:NTHI0824"/>
<dbReference type="HOGENOM" id="CLU_005281_4_0_6"/>
<dbReference type="Proteomes" id="UP000002525">
    <property type="component" value="Chromosome"/>
</dbReference>
<dbReference type="GO" id="GO:0005829">
    <property type="term" value="C:cytosol"/>
    <property type="evidence" value="ECO:0007669"/>
    <property type="project" value="TreeGrafter"/>
</dbReference>
<dbReference type="GO" id="GO:0003723">
    <property type="term" value="F:RNA binding"/>
    <property type="evidence" value="ECO:0007669"/>
    <property type="project" value="InterPro"/>
</dbReference>
<dbReference type="GO" id="GO:0160150">
    <property type="term" value="F:tRNA pseudouridine(13) synthase activity"/>
    <property type="evidence" value="ECO:0007669"/>
    <property type="project" value="UniProtKB-EC"/>
</dbReference>
<dbReference type="GO" id="GO:0031119">
    <property type="term" value="P:tRNA pseudouridine synthesis"/>
    <property type="evidence" value="ECO:0007669"/>
    <property type="project" value="UniProtKB-UniRule"/>
</dbReference>
<dbReference type="CDD" id="cd02575">
    <property type="entry name" value="PseudoU_synth_EcTruD"/>
    <property type="match status" value="1"/>
</dbReference>
<dbReference type="FunFam" id="3.30.2350.20:FF:000008">
    <property type="entry name" value="tRNA pseudouridine synthase D"/>
    <property type="match status" value="1"/>
</dbReference>
<dbReference type="Gene3D" id="3.30.2350.20">
    <property type="entry name" value="TruD, catalytic domain"/>
    <property type="match status" value="1"/>
</dbReference>
<dbReference type="Gene3D" id="3.30.2340.10">
    <property type="entry name" value="TruD, insertion domain"/>
    <property type="match status" value="1"/>
</dbReference>
<dbReference type="HAMAP" id="MF_01082">
    <property type="entry name" value="TruD"/>
    <property type="match status" value="1"/>
</dbReference>
<dbReference type="InterPro" id="IPR020103">
    <property type="entry name" value="PsdUridine_synth_cat_dom_sf"/>
</dbReference>
<dbReference type="InterPro" id="IPR001656">
    <property type="entry name" value="PsdUridine_synth_TruD"/>
</dbReference>
<dbReference type="InterPro" id="IPR020119">
    <property type="entry name" value="PsdUridine_synth_TruD_CS"/>
</dbReference>
<dbReference type="InterPro" id="IPR011760">
    <property type="entry name" value="PsdUridine_synth_TruD_insert"/>
</dbReference>
<dbReference type="InterPro" id="IPR042214">
    <property type="entry name" value="TruD_catalytic"/>
</dbReference>
<dbReference type="InterPro" id="IPR043165">
    <property type="entry name" value="TruD_insert_sf"/>
</dbReference>
<dbReference type="InterPro" id="IPR050170">
    <property type="entry name" value="TruD_pseudoU_synthase"/>
</dbReference>
<dbReference type="NCBIfam" id="NF002155">
    <property type="entry name" value="PRK00984.1-4"/>
    <property type="match status" value="1"/>
</dbReference>
<dbReference type="NCBIfam" id="TIGR00094">
    <property type="entry name" value="tRNA_TruD_broad"/>
    <property type="match status" value="1"/>
</dbReference>
<dbReference type="PANTHER" id="PTHR47811">
    <property type="entry name" value="TRNA PSEUDOURIDINE SYNTHASE D"/>
    <property type="match status" value="1"/>
</dbReference>
<dbReference type="PANTHER" id="PTHR47811:SF1">
    <property type="entry name" value="TRNA PSEUDOURIDINE SYNTHASE D"/>
    <property type="match status" value="1"/>
</dbReference>
<dbReference type="Pfam" id="PF01142">
    <property type="entry name" value="TruD"/>
    <property type="match status" value="2"/>
</dbReference>
<dbReference type="SUPFAM" id="SSF55120">
    <property type="entry name" value="Pseudouridine synthase"/>
    <property type="match status" value="1"/>
</dbReference>
<dbReference type="PROSITE" id="PS50984">
    <property type="entry name" value="TRUD"/>
    <property type="match status" value="1"/>
</dbReference>
<dbReference type="PROSITE" id="PS01268">
    <property type="entry name" value="UPF0024"/>
    <property type="match status" value="1"/>
</dbReference>
<proteinExistence type="inferred from homology"/>
<evidence type="ECO:0000255" key="1">
    <source>
        <dbReference type="HAMAP-Rule" id="MF_01082"/>
    </source>
</evidence>
<accession>Q4QML9</accession>
<name>TRUD_HAEI8</name>
<feature type="chain" id="PRO_0000230141" description="tRNA pseudouridine synthase D">
    <location>
        <begin position="1"/>
        <end position="339"/>
    </location>
</feature>
<feature type="domain" description="TRUD" evidence="1">
    <location>
        <begin position="155"/>
        <end position="311"/>
    </location>
</feature>
<feature type="active site" description="Nucleophile" evidence="1">
    <location>
        <position position="80"/>
    </location>
</feature>